<evidence type="ECO:0000305" key="1"/>
<feature type="chain" id="PRO_0000191438" description="Sperm protamine P1">
    <location>
        <begin position="1"/>
        <end position="52"/>
    </location>
</feature>
<keyword id="KW-0158">Chromosome</keyword>
<keyword id="KW-0217">Developmental protein</keyword>
<keyword id="KW-0221">Differentiation</keyword>
<keyword id="KW-1015">Disulfide bond</keyword>
<keyword id="KW-0226">DNA condensation</keyword>
<keyword id="KW-0238">DNA-binding</keyword>
<keyword id="KW-0544">Nucleosome core</keyword>
<keyword id="KW-0539">Nucleus</keyword>
<keyword id="KW-0744">Spermatogenesis</keyword>
<gene>
    <name type="primary">PRM1</name>
</gene>
<organism>
    <name type="scientific">Alouatta seniculus</name>
    <name type="common">Red howler monkey</name>
    <dbReference type="NCBI Taxonomy" id="9503"/>
    <lineage>
        <taxon>Eukaryota</taxon>
        <taxon>Metazoa</taxon>
        <taxon>Chordata</taxon>
        <taxon>Craniata</taxon>
        <taxon>Vertebrata</taxon>
        <taxon>Euteleostomi</taxon>
        <taxon>Mammalia</taxon>
        <taxon>Eutheria</taxon>
        <taxon>Euarchontoglires</taxon>
        <taxon>Primates</taxon>
        <taxon>Haplorrhini</taxon>
        <taxon>Platyrrhini</taxon>
        <taxon>Atelidae</taxon>
        <taxon>Alouattinae</taxon>
        <taxon>Alouatta</taxon>
    </lineage>
</organism>
<accession>P35302</accession>
<name>HSP1_ALOSE</name>
<reference key="1">
    <citation type="journal article" date="1993" name="J. Mol. Evol.">
        <title>Evolution of protamine P1 genes in primates.</title>
        <authorList>
            <person name="Retief J.D."/>
            <person name="Winkfein R.J."/>
            <person name="Dixon G.H."/>
            <person name="Adroer R."/>
            <person name="Queralt R."/>
            <person name="Ballabriga J."/>
            <person name="Oliva R."/>
        </authorList>
    </citation>
    <scope>NUCLEOTIDE SEQUENCE [GENOMIC DNA]</scope>
</reference>
<proteinExistence type="evidence at transcript level"/>
<comment type="function">
    <text>Protamines substitute for histones in the chromatin of sperm during the haploid phase of spermatogenesis. They compact sperm DNA into a highly condensed, stable and inactive complex.</text>
</comment>
<comment type="subunit">
    <text>Cross-linked by interchain disulfide bonds around the DNA-helix.</text>
</comment>
<comment type="subcellular location">
    <subcellularLocation>
        <location>Nucleus</location>
    </subcellularLocation>
    <subcellularLocation>
        <location>Chromosome</location>
    </subcellularLocation>
</comment>
<comment type="tissue specificity">
    <text>Testis.</text>
</comment>
<comment type="similarity">
    <text evidence="1">Belongs to the protamine P1 family.</text>
</comment>
<sequence length="52" mass="6954">MARYRCCRSRSLSRSRCYRQRPRCRRRRRRSCRRPRASRCCRRRYRLRRRRY</sequence>
<dbReference type="EMBL" id="L14592">
    <property type="protein sequence ID" value="AAA51404.1"/>
    <property type="molecule type" value="Genomic_DNA"/>
</dbReference>
<dbReference type="GO" id="GO:0000786">
    <property type="term" value="C:nucleosome"/>
    <property type="evidence" value="ECO:0007669"/>
    <property type="project" value="UniProtKB-KW"/>
</dbReference>
<dbReference type="GO" id="GO:0005634">
    <property type="term" value="C:nucleus"/>
    <property type="evidence" value="ECO:0007669"/>
    <property type="project" value="UniProtKB-SubCell"/>
</dbReference>
<dbReference type="GO" id="GO:0003677">
    <property type="term" value="F:DNA binding"/>
    <property type="evidence" value="ECO:0007669"/>
    <property type="project" value="UniProtKB-KW"/>
</dbReference>
<dbReference type="GO" id="GO:0030261">
    <property type="term" value="P:chromosome condensation"/>
    <property type="evidence" value="ECO:0007669"/>
    <property type="project" value="UniProtKB-KW"/>
</dbReference>
<dbReference type="GO" id="GO:0035092">
    <property type="term" value="P:sperm DNA condensation"/>
    <property type="evidence" value="ECO:0007669"/>
    <property type="project" value="InterPro"/>
</dbReference>
<dbReference type="InterPro" id="IPR000221">
    <property type="entry name" value="Protamine_P1"/>
</dbReference>
<dbReference type="Pfam" id="PF00260">
    <property type="entry name" value="Protamine_P1"/>
    <property type="match status" value="1"/>
</dbReference>
<dbReference type="PROSITE" id="PS00048">
    <property type="entry name" value="PROTAMINE_P1"/>
    <property type="match status" value="1"/>
</dbReference>
<protein>
    <recommendedName>
        <fullName>Sperm protamine P1</fullName>
    </recommendedName>
</protein>